<name>DNAJ_PSYIN</name>
<evidence type="ECO:0000255" key="1">
    <source>
        <dbReference type="HAMAP-Rule" id="MF_01152"/>
    </source>
</evidence>
<gene>
    <name evidence="1" type="primary">dnaJ</name>
    <name type="ordered locus">Ping_0918</name>
</gene>
<keyword id="KW-0143">Chaperone</keyword>
<keyword id="KW-0963">Cytoplasm</keyword>
<keyword id="KW-0235">DNA replication</keyword>
<keyword id="KW-0479">Metal-binding</keyword>
<keyword id="KW-1185">Reference proteome</keyword>
<keyword id="KW-0677">Repeat</keyword>
<keyword id="KW-0346">Stress response</keyword>
<keyword id="KW-0862">Zinc</keyword>
<keyword id="KW-0863">Zinc-finger</keyword>
<dbReference type="EMBL" id="CP000510">
    <property type="protein sequence ID" value="ABM02760.1"/>
    <property type="molecule type" value="Genomic_DNA"/>
</dbReference>
<dbReference type="RefSeq" id="WP_011769323.1">
    <property type="nucleotide sequence ID" value="NC_008709.1"/>
</dbReference>
<dbReference type="SMR" id="A1STE5"/>
<dbReference type="STRING" id="357804.Ping_0918"/>
<dbReference type="KEGG" id="pin:Ping_0918"/>
<dbReference type="eggNOG" id="COG0484">
    <property type="taxonomic scope" value="Bacteria"/>
</dbReference>
<dbReference type="HOGENOM" id="CLU_017633_0_7_6"/>
<dbReference type="OrthoDB" id="9779889at2"/>
<dbReference type="Proteomes" id="UP000000639">
    <property type="component" value="Chromosome"/>
</dbReference>
<dbReference type="GO" id="GO:0005737">
    <property type="term" value="C:cytoplasm"/>
    <property type="evidence" value="ECO:0007669"/>
    <property type="project" value="UniProtKB-SubCell"/>
</dbReference>
<dbReference type="GO" id="GO:0005524">
    <property type="term" value="F:ATP binding"/>
    <property type="evidence" value="ECO:0007669"/>
    <property type="project" value="InterPro"/>
</dbReference>
<dbReference type="GO" id="GO:0031072">
    <property type="term" value="F:heat shock protein binding"/>
    <property type="evidence" value="ECO:0007669"/>
    <property type="project" value="InterPro"/>
</dbReference>
<dbReference type="GO" id="GO:0051082">
    <property type="term" value="F:unfolded protein binding"/>
    <property type="evidence" value="ECO:0007669"/>
    <property type="project" value="UniProtKB-UniRule"/>
</dbReference>
<dbReference type="GO" id="GO:0008270">
    <property type="term" value="F:zinc ion binding"/>
    <property type="evidence" value="ECO:0007669"/>
    <property type="project" value="UniProtKB-UniRule"/>
</dbReference>
<dbReference type="GO" id="GO:0051085">
    <property type="term" value="P:chaperone cofactor-dependent protein refolding"/>
    <property type="evidence" value="ECO:0007669"/>
    <property type="project" value="TreeGrafter"/>
</dbReference>
<dbReference type="GO" id="GO:0006260">
    <property type="term" value="P:DNA replication"/>
    <property type="evidence" value="ECO:0007669"/>
    <property type="project" value="UniProtKB-KW"/>
</dbReference>
<dbReference type="GO" id="GO:0042026">
    <property type="term" value="P:protein refolding"/>
    <property type="evidence" value="ECO:0007669"/>
    <property type="project" value="TreeGrafter"/>
</dbReference>
<dbReference type="GO" id="GO:0009408">
    <property type="term" value="P:response to heat"/>
    <property type="evidence" value="ECO:0007669"/>
    <property type="project" value="InterPro"/>
</dbReference>
<dbReference type="CDD" id="cd06257">
    <property type="entry name" value="DnaJ"/>
    <property type="match status" value="1"/>
</dbReference>
<dbReference type="CDD" id="cd10747">
    <property type="entry name" value="DnaJ_C"/>
    <property type="match status" value="1"/>
</dbReference>
<dbReference type="CDD" id="cd10719">
    <property type="entry name" value="DnaJ_zf"/>
    <property type="match status" value="1"/>
</dbReference>
<dbReference type="FunFam" id="1.10.287.110:FF:000034">
    <property type="entry name" value="Chaperone protein DnaJ"/>
    <property type="match status" value="1"/>
</dbReference>
<dbReference type="FunFam" id="2.10.230.10:FF:000002">
    <property type="entry name" value="Molecular chaperone DnaJ"/>
    <property type="match status" value="1"/>
</dbReference>
<dbReference type="FunFam" id="2.60.260.20:FF:000004">
    <property type="entry name" value="Molecular chaperone DnaJ"/>
    <property type="match status" value="1"/>
</dbReference>
<dbReference type="Gene3D" id="1.10.287.110">
    <property type="entry name" value="DnaJ domain"/>
    <property type="match status" value="1"/>
</dbReference>
<dbReference type="Gene3D" id="2.10.230.10">
    <property type="entry name" value="Heat shock protein DnaJ, cysteine-rich domain"/>
    <property type="match status" value="1"/>
</dbReference>
<dbReference type="Gene3D" id="2.60.260.20">
    <property type="entry name" value="Urease metallochaperone UreE, N-terminal domain"/>
    <property type="match status" value="2"/>
</dbReference>
<dbReference type="HAMAP" id="MF_01152">
    <property type="entry name" value="DnaJ"/>
    <property type="match status" value="1"/>
</dbReference>
<dbReference type="InterPro" id="IPR012724">
    <property type="entry name" value="DnaJ"/>
</dbReference>
<dbReference type="InterPro" id="IPR002939">
    <property type="entry name" value="DnaJ_C"/>
</dbReference>
<dbReference type="InterPro" id="IPR001623">
    <property type="entry name" value="DnaJ_domain"/>
</dbReference>
<dbReference type="InterPro" id="IPR018253">
    <property type="entry name" value="DnaJ_domain_CS"/>
</dbReference>
<dbReference type="InterPro" id="IPR008971">
    <property type="entry name" value="HSP40/DnaJ_pept-bd"/>
</dbReference>
<dbReference type="InterPro" id="IPR001305">
    <property type="entry name" value="HSP_DnaJ_Cys-rich_dom"/>
</dbReference>
<dbReference type="InterPro" id="IPR036410">
    <property type="entry name" value="HSP_DnaJ_Cys-rich_dom_sf"/>
</dbReference>
<dbReference type="InterPro" id="IPR036869">
    <property type="entry name" value="J_dom_sf"/>
</dbReference>
<dbReference type="NCBIfam" id="TIGR02349">
    <property type="entry name" value="DnaJ_bact"/>
    <property type="match status" value="1"/>
</dbReference>
<dbReference type="NCBIfam" id="NF008035">
    <property type="entry name" value="PRK10767.1"/>
    <property type="match status" value="1"/>
</dbReference>
<dbReference type="PANTHER" id="PTHR43096:SF48">
    <property type="entry name" value="CHAPERONE PROTEIN DNAJ"/>
    <property type="match status" value="1"/>
</dbReference>
<dbReference type="PANTHER" id="PTHR43096">
    <property type="entry name" value="DNAJ HOMOLOG 1, MITOCHONDRIAL-RELATED"/>
    <property type="match status" value="1"/>
</dbReference>
<dbReference type="Pfam" id="PF00226">
    <property type="entry name" value="DnaJ"/>
    <property type="match status" value="1"/>
</dbReference>
<dbReference type="Pfam" id="PF01556">
    <property type="entry name" value="DnaJ_C"/>
    <property type="match status" value="1"/>
</dbReference>
<dbReference type="Pfam" id="PF00684">
    <property type="entry name" value="DnaJ_CXXCXGXG"/>
    <property type="match status" value="1"/>
</dbReference>
<dbReference type="PRINTS" id="PR00625">
    <property type="entry name" value="JDOMAIN"/>
</dbReference>
<dbReference type="SMART" id="SM00271">
    <property type="entry name" value="DnaJ"/>
    <property type="match status" value="1"/>
</dbReference>
<dbReference type="SUPFAM" id="SSF46565">
    <property type="entry name" value="Chaperone J-domain"/>
    <property type="match status" value="1"/>
</dbReference>
<dbReference type="SUPFAM" id="SSF57938">
    <property type="entry name" value="DnaJ/Hsp40 cysteine-rich domain"/>
    <property type="match status" value="1"/>
</dbReference>
<dbReference type="SUPFAM" id="SSF49493">
    <property type="entry name" value="HSP40/DnaJ peptide-binding domain"/>
    <property type="match status" value="2"/>
</dbReference>
<dbReference type="PROSITE" id="PS00636">
    <property type="entry name" value="DNAJ_1"/>
    <property type="match status" value="1"/>
</dbReference>
<dbReference type="PROSITE" id="PS50076">
    <property type="entry name" value="DNAJ_2"/>
    <property type="match status" value="1"/>
</dbReference>
<dbReference type="PROSITE" id="PS51188">
    <property type="entry name" value="ZF_CR"/>
    <property type="match status" value="1"/>
</dbReference>
<comment type="function">
    <text evidence="1">Participates actively in the response to hyperosmotic and heat shock by preventing the aggregation of stress-denatured proteins and by disaggregating proteins, also in an autonomous, DnaK-independent fashion. Unfolded proteins bind initially to DnaJ; upon interaction with the DnaJ-bound protein, DnaK hydrolyzes its bound ATP, resulting in the formation of a stable complex. GrpE releases ADP from DnaK; ATP binding to DnaK triggers the release of the substrate protein, thus completing the reaction cycle. Several rounds of ATP-dependent interactions between DnaJ, DnaK and GrpE are required for fully efficient folding. Also involved, together with DnaK and GrpE, in the DNA replication of plasmids through activation of initiation proteins.</text>
</comment>
<comment type="cofactor">
    <cofactor evidence="1">
        <name>Zn(2+)</name>
        <dbReference type="ChEBI" id="CHEBI:29105"/>
    </cofactor>
    <text evidence="1">Binds 2 Zn(2+) ions per monomer.</text>
</comment>
<comment type="subunit">
    <text evidence="1">Homodimer.</text>
</comment>
<comment type="subcellular location">
    <subcellularLocation>
        <location evidence="1">Cytoplasm</location>
    </subcellularLocation>
</comment>
<comment type="domain">
    <text evidence="1">The J domain is necessary and sufficient to stimulate DnaK ATPase activity. Zinc center 1 plays an important role in the autonomous, DnaK-independent chaperone activity of DnaJ. Zinc center 2 is essential for interaction with DnaK and for DnaJ activity.</text>
</comment>
<comment type="similarity">
    <text evidence="1">Belongs to the DnaJ family.</text>
</comment>
<sequence>MAKRDCYEVLGISRDATEKEVKKAYKRLAMKYHPDRTSGNDELEVKFKEVKEAYEILNDSQKKAAYDQYGHDGVNQQGRGGFDNSDFGDQFGDIFGDIFGGGRRGGGGGGQRPQQGSDLRYNMELTLEEAVRGISKEIQIPTQVHCEQCNGSGAKKGTEAKTCGTCYGQGQVQMRQGFFAVNQACPTCRGQGKIISDPCHKCHGHGRYERSKNMSVKIPAGVDTGDRIRLSGEGEAGEHGGPAGDLYVQMNVLPHHVFERDGNNLHCEVPISFTEAALGSEIEVPTLDGRVKLKIPAETQTGRVFRMRNKGVKSVRSHATGDLMCKVMVETPVKLSSKQRDLLKEFETLCSSSSTKHKPKSEGFLTSIKTFFDDLSS</sequence>
<organism>
    <name type="scientific">Psychromonas ingrahamii (strain DSM 17664 / CCUG 51855 / 37)</name>
    <dbReference type="NCBI Taxonomy" id="357804"/>
    <lineage>
        <taxon>Bacteria</taxon>
        <taxon>Pseudomonadati</taxon>
        <taxon>Pseudomonadota</taxon>
        <taxon>Gammaproteobacteria</taxon>
        <taxon>Alteromonadales</taxon>
        <taxon>Psychromonadaceae</taxon>
        <taxon>Psychromonas</taxon>
    </lineage>
</organism>
<feature type="chain" id="PRO_1000085259" description="Chaperone protein DnaJ">
    <location>
        <begin position="1"/>
        <end position="377"/>
    </location>
</feature>
<feature type="domain" description="J" evidence="1">
    <location>
        <begin position="5"/>
        <end position="70"/>
    </location>
</feature>
<feature type="repeat" description="CXXCXGXG motif">
    <location>
        <begin position="146"/>
        <end position="153"/>
    </location>
</feature>
<feature type="repeat" description="CXXCXGXG motif">
    <location>
        <begin position="163"/>
        <end position="170"/>
    </location>
</feature>
<feature type="repeat" description="CXXCXGXG motif">
    <location>
        <begin position="185"/>
        <end position="192"/>
    </location>
</feature>
<feature type="repeat" description="CXXCXGXG motif">
    <location>
        <begin position="199"/>
        <end position="206"/>
    </location>
</feature>
<feature type="zinc finger region" description="CR-type" evidence="1">
    <location>
        <begin position="133"/>
        <end position="211"/>
    </location>
</feature>
<feature type="binding site" evidence="1">
    <location>
        <position position="146"/>
    </location>
    <ligand>
        <name>Zn(2+)</name>
        <dbReference type="ChEBI" id="CHEBI:29105"/>
        <label>1</label>
    </ligand>
</feature>
<feature type="binding site" evidence="1">
    <location>
        <position position="149"/>
    </location>
    <ligand>
        <name>Zn(2+)</name>
        <dbReference type="ChEBI" id="CHEBI:29105"/>
        <label>1</label>
    </ligand>
</feature>
<feature type="binding site" evidence="1">
    <location>
        <position position="163"/>
    </location>
    <ligand>
        <name>Zn(2+)</name>
        <dbReference type="ChEBI" id="CHEBI:29105"/>
        <label>2</label>
    </ligand>
</feature>
<feature type="binding site" evidence="1">
    <location>
        <position position="166"/>
    </location>
    <ligand>
        <name>Zn(2+)</name>
        <dbReference type="ChEBI" id="CHEBI:29105"/>
        <label>2</label>
    </ligand>
</feature>
<feature type="binding site" evidence="1">
    <location>
        <position position="185"/>
    </location>
    <ligand>
        <name>Zn(2+)</name>
        <dbReference type="ChEBI" id="CHEBI:29105"/>
        <label>2</label>
    </ligand>
</feature>
<feature type="binding site" evidence="1">
    <location>
        <position position="188"/>
    </location>
    <ligand>
        <name>Zn(2+)</name>
        <dbReference type="ChEBI" id="CHEBI:29105"/>
        <label>2</label>
    </ligand>
</feature>
<feature type="binding site" evidence="1">
    <location>
        <position position="199"/>
    </location>
    <ligand>
        <name>Zn(2+)</name>
        <dbReference type="ChEBI" id="CHEBI:29105"/>
        <label>1</label>
    </ligand>
</feature>
<feature type="binding site" evidence="1">
    <location>
        <position position="202"/>
    </location>
    <ligand>
        <name>Zn(2+)</name>
        <dbReference type="ChEBI" id="CHEBI:29105"/>
        <label>1</label>
    </ligand>
</feature>
<protein>
    <recommendedName>
        <fullName evidence="1">Chaperone protein DnaJ</fullName>
    </recommendedName>
</protein>
<accession>A1STE5</accession>
<proteinExistence type="inferred from homology"/>
<reference key="1">
    <citation type="journal article" date="2008" name="BMC Genomics">
        <title>Genomics of an extreme psychrophile, Psychromonas ingrahamii.</title>
        <authorList>
            <person name="Riley M."/>
            <person name="Staley J.T."/>
            <person name="Danchin A."/>
            <person name="Wang T.Z."/>
            <person name="Brettin T.S."/>
            <person name="Hauser L.J."/>
            <person name="Land M.L."/>
            <person name="Thompson L.S."/>
        </authorList>
    </citation>
    <scope>NUCLEOTIDE SEQUENCE [LARGE SCALE GENOMIC DNA]</scope>
    <source>
        <strain>DSM 17664 / CCUG 51855 / 37</strain>
    </source>
</reference>